<proteinExistence type="inferred from homology"/>
<dbReference type="EC" id="2.7.7.6" evidence="1"/>
<dbReference type="EMBL" id="AJ879453">
    <property type="protein sequence ID" value="CAI53786.1"/>
    <property type="status" value="ALT_INIT"/>
    <property type="molecule type" value="Genomic_DNA"/>
</dbReference>
<dbReference type="RefSeq" id="YP_319757.1">
    <property type="nucleotide sequence ID" value="NC_007407.1"/>
</dbReference>
<dbReference type="SMR" id="Q3V542"/>
<dbReference type="GeneID" id="3677450"/>
<dbReference type="GO" id="GO:0009507">
    <property type="term" value="C:chloroplast"/>
    <property type="evidence" value="ECO:0007669"/>
    <property type="project" value="UniProtKB-SubCell"/>
</dbReference>
<dbReference type="GO" id="GO:0000428">
    <property type="term" value="C:DNA-directed RNA polymerase complex"/>
    <property type="evidence" value="ECO:0007669"/>
    <property type="project" value="UniProtKB-KW"/>
</dbReference>
<dbReference type="GO" id="GO:0005739">
    <property type="term" value="C:mitochondrion"/>
    <property type="evidence" value="ECO:0007669"/>
    <property type="project" value="GOC"/>
</dbReference>
<dbReference type="GO" id="GO:0003677">
    <property type="term" value="F:DNA binding"/>
    <property type="evidence" value="ECO:0007669"/>
    <property type="project" value="UniProtKB-UniRule"/>
</dbReference>
<dbReference type="GO" id="GO:0003899">
    <property type="term" value="F:DNA-directed RNA polymerase activity"/>
    <property type="evidence" value="ECO:0007669"/>
    <property type="project" value="UniProtKB-UniRule"/>
</dbReference>
<dbReference type="GO" id="GO:0032549">
    <property type="term" value="F:ribonucleoside binding"/>
    <property type="evidence" value="ECO:0007669"/>
    <property type="project" value="InterPro"/>
</dbReference>
<dbReference type="GO" id="GO:0006351">
    <property type="term" value="P:DNA-templated transcription"/>
    <property type="evidence" value="ECO:0007669"/>
    <property type="project" value="UniProtKB-UniRule"/>
</dbReference>
<dbReference type="CDD" id="cd00653">
    <property type="entry name" value="RNA_pol_B_RPB2"/>
    <property type="match status" value="1"/>
</dbReference>
<dbReference type="FunFam" id="3.90.1110.10:FF:000009">
    <property type="entry name" value="DNA-directed RNA polymerase subunit beta"/>
    <property type="match status" value="1"/>
</dbReference>
<dbReference type="Gene3D" id="2.40.50.100">
    <property type="match status" value="1"/>
</dbReference>
<dbReference type="Gene3D" id="2.40.50.150">
    <property type="match status" value="1"/>
</dbReference>
<dbReference type="Gene3D" id="3.90.1100.10">
    <property type="match status" value="1"/>
</dbReference>
<dbReference type="Gene3D" id="2.30.150.10">
    <property type="entry name" value="DNA-directed RNA polymerase, beta subunit, external 1 domain"/>
    <property type="match status" value="1"/>
</dbReference>
<dbReference type="Gene3D" id="2.40.270.10">
    <property type="entry name" value="DNA-directed RNA polymerase, subunit 2, domain 6"/>
    <property type="match status" value="2"/>
</dbReference>
<dbReference type="Gene3D" id="3.90.1800.10">
    <property type="entry name" value="RNA polymerase alpha subunit dimerisation domain"/>
    <property type="match status" value="1"/>
</dbReference>
<dbReference type="Gene3D" id="3.90.1110.10">
    <property type="entry name" value="RNA polymerase Rpb2, domain 2"/>
    <property type="match status" value="1"/>
</dbReference>
<dbReference type="HAMAP" id="MF_01321">
    <property type="entry name" value="RNApol_bact_RpoB"/>
    <property type="match status" value="1"/>
</dbReference>
<dbReference type="InterPro" id="IPR042107">
    <property type="entry name" value="DNA-dir_RNA_pol_bsu_ext_1_sf"/>
</dbReference>
<dbReference type="InterPro" id="IPR015712">
    <property type="entry name" value="DNA-dir_RNA_pol_su2"/>
</dbReference>
<dbReference type="InterPro" id="IPR007120">
    <property type="entry name" value="DNA-dir_RNAP_su2_dom"/>
</dbReference>
<dbReference type="InterPro" id="IPR037033">
    <property type="entry name" value="DNA-dir_RNAP_su2_hyb_sf"/>
</dbReference>
<dbReference type="InterPro" id="IPR010243">
    <property type="entry name" value="RNA_pol_bsu_bac"/>
</dbReference>
<dbReference type="InterPro" id="IPR007121">
    <property type="entry name" value="RNA_pol_bsu_CS"/>
</dbReference>
<dbReference type="InterPro" id="IPR007644">
    <property type="entry name" value="RNA_pol_bsu_protrusion"/>
</dbReference>
<dbReference type="InterPro" id="IPR007642">
    <property type="entry name" value="RNA_pol_Rpb2_2"/>
</dbReference>
<dbReference type="InterPro" id="IPR037034">
    <property type="entry name" value="RNA_pol_Rpb2_2_sf"/>
</dbReference>
<dbReference type="InterPro" id="IPR007645">
    <property type="entry name" value="RNA_pol_Rpb2_3"/>
</dbReference>
<dbReference type="InterPro" id="IPR007641">
    <property type="entry name" value="RNA_pol_Rpb2_7"/>
</dbReference>
<dbReference type="InterPro" id="IPR014724">
    <property type="entry name" value="RNA_pol_RPB2_OB-fold"/>
</dbReference>
<dbReference type="NCBIfam" id="NF001616">
    <property type="entry name" value="PRK00405.1"/>
    <property type="match status" value="1"/>
</dbReference>
<dbReference type="PANTHER" id="PTHR20856">
    <property type="entry name" value="DNA-DIRECTED RNA POLYMERASE I SUBUNIT 2"/>
    <property type="match status" value="1"/>
</dbReference>
<dbReference type="Pfam" id="PF04563">
    <property type="entry name" value="RNA_pol_Rpb2_1"/>
    <property type="match status" value="1"/>
</dbReference>
<dbReference type="Pfam" id="PF04561">
    <property type="entry name" value="RNA_pol_Rpb2_2"/>
    <property type="match status" value="1"/>
</dbReference>
<dbReference type="Pfam" id="PF04565">
    <property type="entry name" value="RNA_pol_Rpb2_3"/>
    <property type="match status" value="1"/>
</dbReference>
<dbReference type="Pfam" id="PF00562">
    <property type="entry name" value="RNA_pol_Rpb2_6"/>
    <property type="match status" value="1"/>
</dbReference>
<dbReference type="Pfam" id="PF04560">
    <property type="entry name" value="RNA_pol_Rpb2_7"/>
    <property type="match status" value="1"/>
</dbReference>
<dbReference type="SUPFAM" id="SSF64484">
    <property type="entry name" value="beta and beta-prime subunits of DNA dependent RNA-polymerase"/>
    <property type="match status" value="1"/>
</dbReference>
<dbReference type="PROSITE" id="PS01166">
    <property type="entry name" value="RNA_POL_BETA"/>
    <property type="match status" value="1"/>
</dbReference>
<gene>
    <name evidence="1" type="primary">rpoB</name>
</gene>
<geneLocation type="chloroplast"/>
<evidence type="ECO:0000255" key="1">
    <source>
        <dbReference type="HAMAP-Rule" id="MF_01321"/>
    </source>
</evidence>
<evidence type="ECO:0000305" key="2"/>
<sequence length="1071" mass="120960">MPRDGNEGMFTIPGFSQIQFEGFCRFIDQGLMEEFHKFPKIEDTDQEIEFQLFVERYQLVEPLIKERDAVYESLTYSSELYVPAGLIWKTGRDMQEQTIFIGNIPLMNSLGTFIVNGIYRIVINQILQSPGIYYRSELDHNGISVYTSTIISDWGGRSELEIDRKSRIWARVSRKQKISILVLSSAMGSNLREILDNVCYPEIFLSFLNDREKKKIGSKENAILEFYQQFACVGGDPVFSESLCKELQKKFFQQRCELGRIGRRNMNRRLNLDIPQSNTFLLPRDVLAAADHLIGMKFGMGTLDDMNHLKNKRIRSVADLLQDQFGLALVRLENAVRGTICGAIRHKLILTPQNLVSSTSLTTTYESFFGLHPLSQVLDRTNPLTQIVHGRKLSYLGPGGLTGRTASFRIRDIHPSHYGRICPIDTSEGINVGLIGSLAIHARIGHWGSIESPFYEVYQRSKETKMVFLSPSRDEYYTVATGNSLALNRGGIQEEQIVPARYRQEFLTIAWEQIHLRSIFPFQYFSIGASLIPFIEHNDANRALMSSNMQRQAVPLSRSEKCIVGTGLERQAALDSGVSAIAECEGKIIYTDTHKIVLSGHGDTISIPLVMYQRSNKNTCMHQNPQVRRGKCIKKGQILADGAATVGGELALGKNVLVAYMPWEGYNFEDAVLISERLVYEDIYTSFHIRKYEIQTHVTSQGPERITHEIPHLEAHLLRNLDRNGIVALGSWVETGDILVGKLTPQTANESSYAPEDRLLRAILGIQVSTAKETCLKLPIGGRGRVIDVRWIQKKGGSSYNPETIRVYISQKREIKVGDKVAGRHGNKGIISKILSRQDMPYLQDGTPVDMVFNPLGVPSRMNVGQIFECSLGLAGDLLDRHYRIAPFDERYEQEASRKLVFSELYEASKQTANPWVFEPEYPGKSRIFDGRTGDPFEQPVLIGKSYILKLIHQVDDKIHGRSSGHYALVTQQPLRGRAKQGGQRVGEMEVWALEGFGVAHILQEMLTYKSDHIRARQEVLGTTIIGGTIPTPEDAPESFRLLVRELRSLALELNHFLVSEKNFQINRKEA</sequence>
<keyword id="KW-0150">Chloroplast</keyword>
<keyword id="KW-0240">DNA-directed RNA polymerase</keyword>
<keyword id="KW-0548">Nucleotidyltransferase</keyword>
<keyword id="KW-0934">Plastid</keyword>
<keyword id="KW-0804">Transcription</keyword>
<keyword id="KW-0808">Transferase</keyword>
<reference key="1">
    <citation type="journal article" date="2005" name="Mol. Biol. Evol.">
        <title>Analysis of Acorus calamus chloroplast genome and its phylogenetic implications.</title>
        <authorList>
            <person name="Goremykin V.V."/>
            <person name="Holland B."/>
            <person name="Hirsch-Ernst K.I."/>
            <person name="Hellwig F.H."/>
        </authorList>
    </citation>
    <scope>NUCLEOTIDE SEQUENCE [LARGE SCALE GENOMIC DNA]</scope>
</reference>
<name>RPOB_ACOCL</name>
<comment type="function">
    <text evidence="1">DNA-dependent RNA polymerase catalyzes the transcription of DNA into RNA using the four ribonucleoside triphosphates as substrates.</text>
</comment>
<comment type="catalytic activity">
    <reaction evidence="1">
        <text>RNA(n) + a ribonucleoside 5'-triphosphate = RNA(n+1) + diphosphate</text>
        <dbReference type="Rhea" id="RHEA:21248"/>
        <dbReference type="Rhea" id="RHEA-COMP:14527"/>
        <dbReference type="Rhea" id="RHEA-COMP:17342"/>
        <dbReference type="ChEBI" id="CHEBI:33019"/>
        <dbReference type="ChEBI" id="CHEBI:61557"/>
        <dbReference type="ChEBI" id="CHEBI:140395"/>
        <dbReference type="EC" id="2.7.7.6"/>
    </reaction>
</comment>
<comment type="subunit">
    <text evidence="1">In plastids the minimal PEP RNA polymerase catalytic core is composed of four subunits: alpha, beta, beta', and beta''. When a (nuclear-encoded) sigma factor is associated with the core the holoenzyme is formed, which can initiate transcription.</text>
</comment>
<comment type="subcellular location">
    <subcellularLocation>
        <location>Plastid</location>
        <location>Chloroplast</location>
    </subcellularLocation>
</comment>
<comment type="similarity">
    <text evidence="1">Belongs to the RNA polymerase beta chain family.</text>
</comment>
<comment type="sequence caution" evidence="2">
    <conflict type="erroneous initiation">
        <sequence resource="EMBL-CDS" id="CAI53786"/>
    </conflict>
</comment>
<organism>
    <name type="scientific">Acorus calamus</name>
    <name type="common">Sweet flag</name>
    <dbReference type="NCBI Taxonomy" id="4465"/>
    <lineage>
        <taxon>Eukaryota</taxon>
        <taxon>Viridiplantae</taxon>
        <taxon>Streptophyta</taxon>
        <taxon>Embryophyta</taxon>
        <taxon>Tracheophyta</taxon>
        <taxon>Spermatophyta</taxon>
        <taxon>Magnoliopsida</taxon>
        <taxon>Liliopsida</taxon>
        <taxon>Acoraceae</taxon>
        <taxon>Acorus</taxon>
    </lineage>
</organism>
<feature type="chain" id="PRO_0000224125" description="DNA-directed RNA polymerase subunit beta">
    <location>
        <begin position="1"/>
        <end position="1071"/>
    </location>
</feature>
<accession>Q3V542</accession>
<protein>
    <recommendedName>
        <fullName evidence="1">DNA-directed RNA polymerase subunit beta</fullName>
        <ecNumber evidence="1">2.7.7.6</ecNumber>
    </recommendedName>
    <alternativeName>
        <fullName evidence="1">PEP</fullName>
    </alternativeName>
    <alternativeName>
        <fullName evidence="1">Plastid-encoded RNA polymerase subunit beta</fullName>
        <shortName evidence="1">RNA polymerase subunit beta</shortName>
    </alternativeName>
</protein>